<dbReference type="EC" id="6.3.2.-"/>
<dbReference type="EMBL" id="BX294145">
    <property type="protein sequence ID" value="CAD75297.1"/>
    <property type="molecule type" value="Genomic_DNA"/>
</dbReference>
<dbReference type="RefSeq" id="NP_867750.1">
    <property type="nucleotide sequence ID" value="NC_005027.1"/>
</dbReference>
<dbReference type="RefSeq" id="WP_007337623.1">
    <property type="nucleotide sequence ID" value="NC_005027.1"/>
</dbReference>
<dbReference type="SMR" id="Q7UNW8"/>
<dbReference type="FunCoup" id="Q7UNW8">
    <property type="interactions" value="202"/>
</dbReference>
<dbReference type="STRING" id="243090.RB7299"/>
<dbReference type="EnsemblBacteria" id="CAD75297">
    <property type="protein sequence ID" value="CAD75297"/>
    <property type="gene ID" value="RB7299"/>
</dbReference>
<dbReference type="KEGG" id="rba:RB7299"/>
<dbReference type="PATRIC" id="fig|243090.15.peg.3536"/>
<dbReference type="eggNOG" id="COG0189">
    <property type="taxonomic scope" value="Bacteria"/>
</dbReference>
<dbReference type="eggNOG" id="COG0569">
    <property type="taxonomic scope" value="Bacteria"/>
</dbReference>
<dbReference type="HOGENOM" id="CLU_054353_1_0_0"/>
<dbReference type="InParanoid" id="Q7UNW8"/>
<dbReference type="OrthoDB" id="9786585at2"/>
<dbReference type="Proteomes" id="UP000001025">
    <property type="component" value="Chromosome"/>
</dbReference>
<dbReference type="GO" id="GO:0005737">
    <property type="term" value="C:cytoplasm"/>
    <property type="evidence" value="ECO:0000318"/>
    <property type="project" value="GO_Central"/>
</dbReference>
<dbReference type="GO" id="GO:0005524">
    <property type="term" value="F:ATP binding"/>
    <property type="evidence" value="ECO:0007669"/>
    <property type="project" value="UniProtKB-KW"/>
</dbReference>
<dbReference type="GO" id="GO:0046872">
    <property type="term" value="F:metal ion binding"/>
    <property type="evidence" value="ECO:0007669"/>
    <property type="project" value="UniProtKB-KW"/>
</dbReference>
<dbReference type="GO" id="GO:0008324">
    <property type="term" value="F:monoatomic cation transmembrane transporter activity"/>
    <property type="evidence" value="ECO:0007669"/>
    <property type="project" value="InterPro"/>
</dbReference>
<dbReference type="GO" id="GO:0018169">
    <property type="term" value="F:ribosomal S6-glutamic acid ligase activity"/>
    <property type="evidence" value="ECO:0000318"/>
    <property type="project" value="GO_Central"/>
</dbReference>
<dbReference type="GO" id="GO:0006813">
    <property type="term" value="P:potassium ion transport"/>
    <property type="evidence" value="ECO:0007669"/>
    <property type="project" value="InterPro"/>
</dbReference>
<dbReference type="GO" id="GO:0036211">
    <property type="term" value="P:protein modification process"/>
    <property type="evidence" value="ECO:0007669"/>
    <property type="project" value="InterPro"/>
</dbReference>
<dbReference type="GO" id="GO:0009432">
    <property type="term" value="P:SOS response"/>
    <property type="evidence" value="ECO:0000318"/>
    <property type="project" value="GO_Central"/>
</dbReference>
<dbReference type="GO" id="GO:0006412">
    <property type="term" value="P:translation"/>
    <property type="evidence" value="ECO:0007669"/>
    <property type="project" value="UniProtKB-KW"/>
</dbReference>
<dbReference type="Gene3D" id="3.40.50.20">
    <property type="match status" value="1"/>
</dbReference>
<dbReference type="Gene3D" id="3.30.1490.20">
    <property type="entry name" value="ATP-grasp fold, A domain"/>
    <property type="match status" value="1"/>
</dbReference>
<dbReference type="Gene3D" id="3.30.470.20">
    <property type="entry name" value="ATP-grasp fold, B domain"/>
    <property type="match status" value="1"/>
</dbReference>
<dbReference type="Gene3D" id="3.30.70.1450">
    <property type="entry name" value="Regulator of K+ conductance, C-terminal domain"/>
    <property type="match status" value="1"/>
</dbReference>
<dbReference type="InterPro" id="IPR011761">
    <property type="entry name" value="ATP-grasp"/>
</dbReference>
<dbReference type="InterPro" id="IPR013651">
    <property type="entry name" value="ATP-grasp_RimK-type"/>
</dbReference>
<dbReference type="InterPro" id="IPR013815">
    <property type="entry name" value="ATP_grasp_subdomain_1"/>
</dbReference>
<dbReference type="InterPro" id="IPR006037">
    <property type="entry name" value="RCK_C"/>
</dbReference>
<dbReference type="InterPro" id="IPR036721">
    <property type="entry name" value="RCK_C_sf"/>
</dbReference>
<dbReference type="InterPro" id="IPR041107">
    <property type="entry name" value="Rimk_N"/>
</dbReference>
<dbReference type="InterPro" id="IPR004666">
    <property type="entry name" value="Rp_bS6_RimK/Lys_biosynth_LsyX"/>
</dbReference>
<dbReference type="NCBIfam" id="TIGR00768">
    <property type="entry name" value="rimK_fam"/>
    <property type="match status" value="1"/>
</dbReference>
<dbReference type="PANTHER" id="PTHR21621:SF0">
    <property type="entry name" value="BETA-CITRYLGLUTAMATE SYNTHASE B-RELATED"/>
    <property type="match status" value="1"/>
</dbReference>
<dbReference type="PANTHER" id="PTHR21621">
    <property type="entry name" value="RIBOSOMAL PROTEIN S6 MODIFICATION PROTEIN"/>
    <property type="match status" value="1"/>
</dbReference>
<dbReference type="Pfam" id="PF08443">
    <property type="entry name" value="RimK"/>
    <property type="match status" value="1"/>
</dbReference>
<dbReference type="Pfam" id="PF18030">
    <property type="entry name" value="Rimk_N"/>
    <property type="match status" value="1"/>
</dbReference>
<dbReference type="Pfam" id="PF02080">
    <property type="entry name" value="TrkA_C"/>
    <property type="match status" value="1"/>
</dbReference>
<dbReference type="SUPFAM" id="SSF56059">
    <property type="entry name" value="Glutathione synthetase ATP-binding domain-like"/>
    <property type="match status" value="1"/>
</dbReference>
<dbReference type="SUPFAM" id="SSF116726">
    <property type="entry name" value="TrkA C-terminal domain-like"/>
    <property type="match status" value="1"/>
</dbReference>
<dbReference type="PROSITE" id="PS50975">
    <property type="entry name" value="ATP_GRASP"/>
    <property type="match status" value="1"/>
</dbReference>
<dbReference type="PROSITE" id="PS51202">
    <property type="entry name" value="RCK_C"/>
    <property type="match status" value="1"/>
</dbReference>
<name>RIMK_RHOBA</name>
<reference key="1">
    <citation type="journal article" date="2003" name="Proc. Natl. Acad. Sci. U.S.A.">
        <title>Complete genome sequence of the marine planctomycete Pirellula sp. strain 1.</title>
        <authorList>
            <person name="Gloeckner F.O."/>
            <person name="Kube M."/>
            <person name="Bauer M."/>
            <person name="Teeling H."/>
            <person name="Lombardot T."/>
            <person name="Ludwig W."/>
            <person name="Gade D."/>
            <person name="Beck A."/>
            <person name="Borzym K."/>
            <person name="Heitmann K."/>
            <person name="Rabus R."/>
            <person name="Schlesner H."/>
            <person name="Amann R."/>
            <person name="Reinhardt R."/>
        </authorList>
    </citation>
    <scope>NUCLEOTIDE SEQUENCE [LARGE SCALE GENOMIC DNA]</scope>
    <source>
        <strain>DSM 10527 / NCIMB 13988 / SH1</strain>
    </source>
</reference>
<organism>
    <name type="scientific">Rhodopirellula baltica (strain DSM 10527 / NCIMB 13988 / SH1)</name>
    <dbReference type="NCBI Taxonomy" id="243090"/>
    <lineage>
        <taxon>Bacteria</taxon>
        <taxon>Pseudomonadati</taxon>
        <taxon>Planctomycetota</taxon>
        <taxon>Planctomycetia</taxon>
        <taxon>Pirellulales</taxon>
        <taxon>Pirellulaceae</taxon>
        <taxon>Rhodopirellula</taxon>
    </lineage>
</organism>
<evidence type="ECO:0000250" key="1"/>
<evidence type="ECO:0000255" key="2">
    <source>
        <dbReference type="PROSITE-ProRule" id="PRU00409"/>
    </source>
</evidence>
<evidence type="ECO:0000255" key="3">
    <source>
        <dbReference type="PROSITE-ProRule" id="PRU00544"/>
    </source>
</evidence>
<evidence type="ECO:0000256" key="4">
    <source>
        <dbReference type="SAM" id="MobiDB-lite"/>
    </source>
</evidence>
<evidence type="ECO:0000305" key="5"/>
<proteinExistence type="inferred from homology"/>
<gene>
    <name type="primary">rimK</name>
    <name type="ordered locus">RB7299</name>
</gene>
<comment type="cofactor">
    <cofactor evidence="1">
        <name>Mg(2+)</name>
        <dbReference type="ChEBI" id="CHEBI:18420"/>
    </cofactor>
    <cofactor evidence="1">
        <name>Mn(2+)</name>
        <dbReference type="ChEBI" id="CHEBI:29035"/>
    </cofactor>
    <text evidence="1">Binds 2 magnesium or manganese ions per subunit.</text>
</comment>
<comment type="similarity">
    <text evidence="5">Belongs to the RimK family.</text>
</comment>
<accession>Q7UNW8</accession>
<sequence>MKLAILSCSPRCYSTRRLVEAAEQRGIKAKVLNTLKFAIDLAEGEPDLYYRSKQLSDYDGVLPRIGASITYFGTAVVRQFEQMDVFCANSSAGISNSRDKLRSLQILSRHQIGIPKTTFVRDRKDILPAIERVGGSPVIIKLLEGTQGVGVILAENVKVAEAIIETLQSTKQNVLVQQFVAESRGKDIRAFVIGDRVVAAMRRVAVGNEFRSNVHRGGQTEAVVLDETYAETAVRAAQIMGLRVAGVDMLEGTNGPQVMEVNSSPGLEGIESATKLDIAGAIIDYMSAQVDFPEVDVRQRLTVSRGYGVTELHVRDGSDYVGKTIDESGLPELDINVLTLYRGTTVIPNPRLKRTLEPHDRLLCFGKLEAMRGMVPEKVRKQRRPKIKRLPDSAATIHAESSRDD</sequence>
<protein>
    <recommendedName>
        <fullName>Probable alpha-L-glutamate ligase</fullName>
        <ecNumber>6.3.2.-</ecNumber>
    </recommendedName>
</protein>
<keyword id="KW-0067">ATP-binding</keyword>
<keyword id="KW-0436">Ligase</keyword>
<keyword id="KW-0460">Magnesium</keyword>
<keyword id="KW-0464">Manganese</keyword>
<keyword id="KW-0479">Metal-binding</keyword>
<keyword id="KW-0547">Nucleotide-binding</keyword>
<keyword id="KW-0648">Protein biosynthesis</keyword>
<keyword id="KW-1185">Reference proteome</keyword>
<feature type="chain" id="PRO_0000205477" description="Probable alpha-L-glutamate ligase">
    <location>
        <begin position="1"/>
        <end position="405"/>
    </location>
</feature>
<feature type="domain" description="ATP-grasp" evidence="2">
    <location>
        <begin position="104"/>
        <end position="287"/>
    </location>
</feature>
<feature type="domain" description="RCK C-terminal" evidence="3">
    <location>
        <begin position="296"/>
        <end position="380"/>
    </location>
</feature>
<feature type="region of interest" description="Disordered" evidence="4">
    <location>
        <begin position="380"/>
        <end position="405"/>
    </location>
</feature>
<feature type="binding site" evidence="2">
    <location>
        <begin position="131"/>
        <end position="186"/>
    </location>
    <ligand>
        <name>ATP</name>
        <dbReference type="ChEBI" id="CHEBI:30616"/>
    </ligand>
</feature>
<feature type="binding site" evidence="1">
    <location>
        <position position="141"/>
    </location>
    <ligand>
        <name>ATP</name>
        <dbReference type="ChEBI" id="CHEBI:30616"/>
    </ligand>
</feature>
<feature type="binding site" evidence="2">
    <location>
        <begin position="178"/>
        <end position="179"/>
    </location>
    <ligand>
        <name>ATP</name>
        <dbReference type="ChEBI" id="CHEBI:30616"/>
    </ligand>
</feature>
<feature type="binding site" evidence="1">
    <location>
        <position position="187"/>
    </location>
    <ligand>
        <name>ATP</name>
        <dbReference type="ChEBI" id="CHEBI:30616"/>
    </ligand>
</feature>
<feature type="binding site" evidence="2">
    <location>
        <begin position="211"/>
        <end position="213"/>
    </location>
    <ligand>
        <name>ATP</name>
        <dbReference type="ChEBI" id="CHEBI:30616"/>
    </ligand>
</feature>
<feature type="binding site" evidence="2">
    <location>
        <position position="248"/>
    </location>
    <ligand>
        <name>Mg(2+)</name>
        <dbReference type="ChEBI" id="CHEBI:18420"/>
        <label>1</label>
    </ligand>
</feature>
<feature type="binding site" evidence="2">
    <location>
        <position position="248"/>
    </location>
    <ligand>
        <name>Mn(2+)</name>
        <dbReference type="ChEBI" id="CHEBI:29035"/>
        <label>1</label>
    </ligand>
</feature>
<feature type="binding site" evidence="2">
    <location>
        <position position="260"/>
    </location>
    <ligand>
        <name>Mg(2+)</name>
        <dbReference type="ChEBI" id="CHEBI:18420"/>
        <label>1</label>
    </ligand>
</feature>
<feature type="binding site" evidence="2">
    <location>
        <position position="260"/>
    </location>
    <ligand>
        <name>Mg(2+)</name>
        <dbReference type="ChEBI" id="CHEBI:18420"/>
        <label>2</label>
    </ligand>
</feature>
<feature type="binding site" evidence="2">
    <location>
        <position position="260"/>
    </location>
    <ligand>
        <name>Mn(2+)</name>
        <dbReference type="ChEBI" id="CHEBI:29035"/>
        <label>1</label>
    </ligand>
</feature>
<feature type="binding site" evidence="2">
    <location>
        <position position="260"/>
    </location>
    <ligand>
        <name>Mn(2+)</name>
        <dbReference type="ChEBI" id="CHEBI:29035"/>
        <label>2</label>
    </ligand>
</feature>
<feature type="binding site" evidence="2">
    <location>
        <position position="262"/>
    </location>
    <ligand>
        <name>Mg(2+)</name>
        <dbReference type="ChEBI" id="CHEBI:18420"/>
        <label>2</label>
    </ligand>
</feature>
<feature type="binding site" evidence="2">
    <location>
        <position position="262"/>
    </location>
    <ligand>
        <name>Mn(2+)</name>
        <dbReference type="ChEBI" id="CHEBI:29035"/>
        <label>2</label>
    </ligand>
</feature>